<reference evidence="6" key="1">
    <citation type="submission" date="2010-11" db="EMBL/GenBank/DDBJ databases">
        <authorList>
            <consortium name="Honey bee genome project"/>
            <person name="Zhang L."/>
            <person name="Deng J."/>
            <person name="Wu Y.-Q."/>
            <person name="Kovar C."/>
            <person name="Aqrawi P."/>
            <person name="Bandaranaike D."/>
            <person name="Blankenburg K."/>
            <person name="Chen D."/>
            <person name="Denson S."/>
            <person name="Dinh H."/>
            <person name="Firestine M."/>
            <person name="Gross S."/>
            <person name="Han Y."/>
            <person name="Hernandez B."/>
            <person name="Holder M."/>
            <person name="Jackson L."/>
            <person name="Javaid M."/>
            <person name="Jing C."/>
            <person name="Jones J."/>
            <person name="Joshi V."/>
            <person name="Kamau G."/>
            <person name="Korchina V."/>
            <person name="Lee S."/>
            <person name="Lorensuhewa L."/>
            <person name="Mata R."/>
            <person name="Mathew T."/>
            <person name="Mims S."/>
            <person name="Ngo R."/>
            <person name="Nguyen L."/>
            <person name="Okwuonu G."/>
            <person name="Ongeri F."/>
            <person name="Osuji N."/>
            <person name="Pham C."/>
            <person name="Puazo M."/>
            <person name="Qu C."/>
            <person name="Quiroz J."/>
            <person name="Raj R."/>
            <person name="Rio Deiros D."/>
            <person name="Santibanez J."/>
            <person name="Scheel M."/>
            <person name="Scherer S."/>
            <person name="Vee V."/>
            <person name="Wang M."/>
            <person name="Xin Y."/>
            <person name="Richards S."/>
            <person name="Reid J.G."/>
            <person name="Newsham I."/>
            <person name="Worley K.C."/>
            <person name="Muzny D.M."/>
            <person name="Gibbs R."/>
        </authorList>
    </citation>
    <scope>NUCLEOTIDE SEQUENCE [LARGE SCALE GENOMIC DNA]</scope>
    <source>
        <strain>DH4</strain>
    </source>
</reference>
<reference evidence="6" key="2">
    <citation type="journal article" date="2008" name="Insect Biochem. Mol. Biol.">
        <title>The SNMP/CD36 gene family in Diptera, Hymenoptera and Coleoptera: Drosophila melanogaster, D. pseudoobscura, Anopheles gambiae, Aedes aegypti, Apis mellifera, and Tribolium castaneum.</title>
        <authorList>
            <person name="Nichols Z."/>
            <person name="Vogt R.G."/>
        </authorList>
    </citation>
    <scope>IDENTIFICATION</scope>
</reference>
<dbReference type="EMBL" id="AADG06001198">
    <property type="status" value="NOT_ANNOTATED_CDS"/>
    <property type="molecule type" value="Genomic_DNA"/>
</dbReference>
<dbReference type="RefSeq" id="XP_026299204.1">
    <property type="nucleotide sequence ID" value="XM_026443419.1"/>
</dbReference>
<dbReference type="RefSeq" id="XP_026299205.1">
    <property type="nucleotide sequence ID" value="XM_026443420.1"/>
</dbReference>
<dbReference type="SMR" id="P86905"/>
<dbReference type="FunCoup" id="P86905">
    <property type="interactions" value="1"/>
</dbReference>
<dbReference type="STRING" id="7460.P86905"/>
<dbReference type="PaxDb" id="7460-GB48343-PA"/>
<dbReference type="EnsemblMetazoa" id="XM_026443419">
    <property type="protein sequence ID" value="XP_026299204"/>
    <property type="gene ID" value="LOC413995"/>
</dbReference>
<dbReference type="EnsemblMetazoa" id="XM_026443420">
    <property type="protein sequence ID" value="XP_026299205"/>
    <property type="gene ID" value="LOC413995"/>
</dbReference>
<dbReference type="GeneID" id="413995"/>
<dbReference type="eggNOG" id="KOG3776">
    <property type="taxonomic scope" value="Eukaryota"/>
</dbReference>
<dbReference type="HOGENOM" id="CLU_019853_1_2_1"/>
<dbReference type="InParanoid" id="P86905"/>
<dbReference type="OMA" id="QRKSSYH"/>
<dbReference type="PhylomeDB" id="P86905"/>
<dbReference type="Proteomes" id="UP000005203">
    <property type="component" value="Linkage group LG10"/>
</dbReference>
<dbReference type="GO" id="GO:0005737">
    <property type="term" value="C:cytoplasm"/>
    <property type="evidence" value="ECO:0007669"/>
    <property type="project" value="TreeGrafter"/>
</dbReference>
<dbReference type="GO" id="GO:0005886">
    <property type="term" value="C:plasma membrane"/>
    <property type="evidence" value="ECO:0007669"/>
    <property type="project" value="UniProtKB-SubCell"/>
</dbReference>
<dbReference type="GO" id="GO:0005044">
    <property type="term" value="F:scavenger receptor activity"/>
    <property type="evidence" value="ECO:0007669"/>
    <property type="project" value="TreeGrafter"/>
</dbReference>
<dbReference type="GO" id="GO:0007608">
    <property type="term" value="P:sensory perception of smell"/>
    <property type="evidence" value="ECO:0007669"/>
    <property type="project" value="UniProtKB-KW"/>
</dbReference>
<dbReference type="InterPro" id="IPR002159">
    <property type="entry name" value="CD36_fam"/>
</dbReference>
<dbReference type="PANTHER" id="PTHR11923">
    <property type="entry name" value="SCAVENGER RECEPTOR CLASS B TYPE-1 SR-B1"/>
    <property type="match status" value="1"/>
</dbReference>
<dbReference type="PANTHER" id="PTHR11923:SF69">
    <property type="entry name" value="SENSORY NEURON MEMBRANE PROTEIN 1"/>
    <property type="match status" value="1"/>
</dbReference>
<dbReference type="Pfam" id="PF01130">
    <property type="entry name" value="CD36"/>
    <property type="match status" value="1"/>
</dbReference>
<dbReference type="PRINTS" id="PR01609">
    <property type="entry name" value="CD36FAMILY"/>
</dbReference>
<comment type="function">
    <text evidence="3">Plays an olfactory role that is not restricted to pheromone sensitivity.</text>
</comment>
<comment type="subcellular location">
    <subcellularLocation>
        <location evidence="1">Cell membrane</location>
        <topology evidence="1">Multi-pass membrane protein</topology>
    </subcellularLocation>
</comment>
<comment type="similarity">
    <text evidence="6">Belongs to the CD36 family.</text>
</comment>
<accession>P86905</accession>
<sequence>MKPKKLGIIGGSLLAFGILICAIAFPPFLRSQVKKQIALKDGSEMRELWSNFPVPLDFKIYLFNVTNPMEITAGEKPILEEVGPFFYDEYKQKVDLVDREEDDSLEYNLKATWFFNPSRSEGLTGEEELIVPHVLILSMIKLTLEQQPAAMGILNKAVDNIFKKPESVFVRAKAREILFDGLPVDCTGKDFASSAICSVLKEKDDALIADGPGRYLFSLFGPKNGTVLPERIRVLRGIKNYKDVGKVTEVNGKTKLDIWGEGDCNEFNGTDSTIFAPLLTEQDDIVSFAPDICRSMGARFDSYTKVKGINTYHYKADLGDMSSHPEEKCFCPSPDSCLTKNLMDLTKCVGAPLIASLPHLLGAEEKYLKMVDGLHPNEEEHGIAMDFEPMTATPLSAHKRLQFNLYLHKVAKFKLMKNFPECLFPIFWVEEGILLGDEFVKKLKTVFKTISIVGFMKWFTIVSGTCVSGAAAALFFKNKDKNKLDITKVTPQKGEEKKWPNQMTISTIQSAAVPPNLDAD</sequence>
<protein>
    <recommendedName>
        <fullName evidence="5">Sensory neuron membrane protein 1</fullName>
    </recommendedName>
</protein>
<proteinExistence type="inferred from homology"/>
<name>SNMP1_APIME</name>
<organism>
    <name type="scientific">Apis mellifera</name>
    <name type="common">Honeybee</name>
    <dbReference type="NCBI Taxonomy" id="7460"/>
    <lineage>
        <taxon>Eukaryota</taxon>
        <taxon>Metazoa</taxon>
        <taxon>Ecdysozoa</taxon>
        <taxon>Arthropoda</taxon>
        <taxon>Hexapoda</taxon>
        <taxon>Insecta</taxon>
        <taxon>Pterygota</taxon>
        <taxon>Neoptera</taxon>
        <taxon>Endopterygota</taxon>
        <taxon>Hymenoptera</taxon>
        <taxon>Apocrita</taxon>
        <taxon>Aculeata</taxon>
        <taxon>Apoidea</taxon>
        <taxon>Anthophila</taxon>
        <taxon>Apidae</taxon>
        <taxon>Apis</taxon>
    </lineage>
</organism>
<keyword id="KW-1003">Cell membrane</keyword>
<keyword id="KW-1015">Disulfide bond</keyword>
<keyword id="KW-0325">Glycoprotein</keyword>
<keyword id="KW-0472">Membrane</keyword>
<keyword id="KW-0552">Olfaction</keyword>
<keyword id="KW-0675">Receptor</keyword>
<keyword id="KW-1185">Reference proteome</keyword>
<keyword id="KW-0716">Sensory transduction</keyword>
<keyword id="KW-0812">Transmembrane</keyword>
<keyword id="KW-1133">Transmembrane helix</keyword>
<feature type="chain" id="PRO_0000408233" description="Sensory neuron membrane protein 1">
    <location>
        <begin position="1"/>
        <end position="520"/>
    </location>
</feature>
<feature type="topological domain" description="Cytoplasmic" evidence="4">
    <location>
        <begin position="1"/>
        <end position="5"/>
    </location>
</feature>
<feature type="transmembrane region" description="Helical" evidence="4">
    <location>
        <begin position="6"/>
        <end position="26"/>
    </location>
</feature>
<feature type="topological domain" description="Extracellular" evidence="4">
    <location>
        <begin position="27"/>
        <end position="451"/>
    </location>
</feature>
<feature type="transmembrane region" description="Helical" evidence="4">
    <location>
        <begin position="452"/>
        <end position="472"/>
    </location>
</feature>
<feature type="topological domain" description="Cytoplasmic" evidence="4">
    <location>
        <begin position="473"/>
        <end position="520"/>
    </location>
</feature>
<feature type="glycosylation site" description="N-linked (GlcNAc...) asparagine" evidence="4">
    <location>
        <position position="64"/>
    </location>
</feature>
<feature type="glycosylation site" description="N-linked (GlcNAc...) asparagine" evidence="4">
    <location>
        <position position="224"/>
    </location>
</feature>
<feature type="glycosylation site" description="N-linked (GlcNAc...) asparagine" evidence="4">
    <location>
        <position position="268"/>
    </location>
</feature>
<feature type="disulfide bond" evidence="2">
    <location>
        <begin position="264"/>
        <end position="329"/>
    </location>
</feature>
<feature type="disulfide bond" evidence="2">
    <location>
        <begin position="293"/>
        <end position="348"/>
    </location>
</feature>
<feature type="disulfide bond" evidence="2">
    <location>
        <begin position="331"/>
        <end position="337"/>
    </location>
</feature>
<evidence type="ECO:0000250" key="1">
    <source>
        <dbReference type="UniProtKB" id="O02351"/>
    </source>
</evidence>
<evidence type="ECO:0000250" key="2">
    <source>
        <dbReference type="UniProtKB" id="P26201"/>
    </source>
</evidence>
<evidence type="ECO:0000250" key="3">
    <source>
        <dbReference type="UniProtKB" id="Q9VDD3"/>
    </source>
</evidence>
<evidence type="ECO:0000255" key="4"/>
<evidence type="ECO:0000303" key="5">
    <source>
    </source>
</evidence>
<evidence type="ECO:0000305" key="6"/>